<sequence length="174" mass="19307">MLPRITITIMSWMLLSCLMLLSQVQGEVAKKDAPSSRSSCPKGSRAYGSYCYALFSVSKNWYDADMACQKRPSGHLVSVLSGAEASFLSSMIKSSGNSGQYVWIGLHDPTLGYEPNRGGWEWSNADVMNYINWETNPSSSSGNHCGTLSRASGFLKWRENYCNLELPYVCKFKA</sequence>
<protein>
    <recommendedName>
        <fullName evidence="16">Regenerating islet-derived protein 3-gamma</fullName>
        <shortName>REG-3-gamma</shortName>
    </recommendedName>
    <alternativeName>
        <fullName>Pancreatitis-associated protein 3</fullName>
    </alternativeName>
    <alternativeName>
        <fullName>Regenerating islet-derived protein III-gamma</fullName>
        <shortName>Reg III-gamma</shortName>
    </alternativeName>
    <component>
        <recommendedName>
            <fullName>Regenerating islet-derived protein 3-gamma 16.5 kDa form</fullName>
        </recommendedName>
    </component>
    <component>
        <recommendedName>
            <fullName>Regenerating islet-derived protein 3-gamma 15 kDa form</fullName>
        </recommendedName>
    </component>
</protein>
<comment type="function">
    <text evidence="4 5 6 8 9 10">Bactericidal C-type lectin which acts exclusively against Gram-positive bacteria and mediates bacterial killing by binding to surface-exposed carbohydrate moieties of peptidoglycan. Restricts bacterial colonization of the intestinal epithelial surface and consequently limits activation of adaptive immune responses by the microbiota.</text>
</comment>
<comment type="function">
    <text evidence="9 11 12 13 14">Acts as a hormone in response to different stimuli like anti-inflammatory signals, such as IL17A, or gut microbiome. Is secreted by different cell types to activate its receptor EXTL3 and induce cell specific signaling pathways (PubMed:22727489, PubMed:27830702, PubMed:36240758). Induced by IL17A in keratinocytes, regulates keratinocyte proliferation and differentiation after skin injury (PubMed:22727489). In parallel, inhibits skin inflammation through the inhibition of inflammatory cytokines such as IL6 and TNF (PubMed:27830702). Induced by IL22 in lung epithelial cells, inhibits cytokine production and regulates allergic airway inflammation (PubMed:28811323). Induced in small intestine by inulin-enriched diet and Lactobacillus gasseri enriched microbiome, plays a role in the improvement of gut barrier function, the regulation of energy balance and glucose levels. Modulates microbiota composition in duodenal contents (PubMed:36240758). Produced by nociceptor in response to endotoxins, prevents endotoxic death by targeting kynurenine pathway in microglia (PubMed:35263589).</text>
</comment>
<comment type="function">
    <molecule>Regenerating islet-derived protein 3-gamma 16.5 kDa form</molecule>
    <text evidence="7">Has bacteriostatic activity.</text>
</comment>
<comment type="function">
    <molecule>Regenerating islet-derived protein 3-gamma 15 kDa form</molecule>
    <text evidence="7">Has bactericidal activity against L.monocytogenes and methicillin-resistant S.aureus.</text>
</comment>
<comment type="activity regulation">
    <molecule>Regenerating islet-derived protein 3-gamma 15 kDa form</molecule>
    <text evidence="2">Lipopolysaccharide inhibits pore-forming activity, explaining why is bactericidal for Gram-positive but not Gram-negative bacteria.</text>
</comment>
<comment type="subunit">
    <molecule>Regenerating islet-derived protein 3-gamma 15 kDa form</molecule>
    <text evidence="2">Forms a hexameric membrane-permeabilizing oligomeric pore on membrane phospholipids. The hexamer is formed by three dimers related by helical symmetry. Forms filaments, filamentation traps pore complexes and limits damage to host cells. Interacts with EXTL3.</text>
</comment>
<comment type="subcellular location">
    <subcellularLocation>
        <location evidence="12 14">Secreted</location>
    </subcellularLocation>
    <subcellularLocation>
        <location evidence="1">Cytoplasm</location>
    </subcellularLocation>
</comment>
<comment type="tissue specificity">
    <text evidence="4 5 6 8 9 10 11 12 13 15">Predominantly expressed in the small intestine, including Paneth cells (at protein level). Hardly detectable in the colon (at protein level) (PubMed:16504538, PubMed:16931762, PubMed:17635956, PubMed:21998396). Highly expressed in the lung epithelium during methicillin-resistant S.aureus infection and allergic airway inflammation (at protein level) (PubMed:28811323). Skin injury increases its epidermal expression (PubMed:22727489, PubMed:23401489, PubMed:27830702). Also expressed in the pancreas (PubMed:9055810). Expressed by nocireceptors (PubMed:35263589).</text>
</comment>
<comment type="developmental stage">
    <text evidence="5">In mid-small intestine, very low levels at birth. Expression levels rise dramatically during the weaning period (P17-P22) and remain high into adulthood in conventionally raised but not germfree animals.</text>
</comment>
<comment type="induction">
    <text evidence="5 6 9 10 11 12 13 14">Up-regulated in Paneth cells by intestinal microbiota (at protein level) (PubMed:16931762). MyD88-mediated signals are essential for its induction in intestinal epithelial cells (PubMed:17635956). Induction in the lung is dependent on IL6ST-induced STAT3 signaling (PubMed:23401489). IL17A and IL33 induces its expression in primary keratinocytes and skin wounds (PubMed:22727489, PubMed:27830702). IL22 induces its expression in lung epithelial cells (PubMed:28811323). Feeding with a fermentable fiber-enriched inulin diet increases expression in intestine (PubMed:36240758). Expressed by nociceptors in response to LPS (PubMed:35263589).</text>
</comment>
<comment type="domain">
    <text evidence="2">The EPN motif is essential for recognition of the peptidoglycan carbohydrate backbone and for efficient bacterial killing with Glu-114 playing a key role in peptidoglycan binding and bactericidal activity.</text>
</comment>
<comment type="PTM">
    <text evidence="7">Proteolytic processing by trypsin removes an inhibitory N-terminal propeptide and is essential for peptidoglycan binding and antibacterial activity.</text>
</comment>
<comment type="disruption phenotype">
    <text evidence="8 13">Mutant mice are born at normal Mendelian ratios. They appear healthy and show no signs of enteropathy, but exhibit marked increase in the number of mucosa-associated bacteria, predominantly Gram-positive, relative to cohoused wild-type littermates in distal small intestine (PubMed:21998396). Nociceptor-specific deficient mice exhibit high mortality rates in response to endotoxin accompanied by increased kynurenine pathway and impaired ATP production in the brain (PubMed:35263589).</text>
</comment>
<dbReference type="EMBL" id="D63361">
    <property type="protein sequence ID" value="BAA18930.1"/>
    <property type="molecule type" value="mRNA"/>
</dbReference>
<dbReference type="EMBL" id="D63362">
    <property type="protein sequence ID" value="BAA18931.1"/>
    <property type="molecule type" value="Genomic_DNA"/>
</dbReference>
<dbReference type="EMBL" id="BC061139">
    <property type="protein sequence ID" value="AAH61139.1"/>
    <property type="molecule type" value="mRNA"/>
</dbReference>
<dbReference type="CCDS" id="CCDS20258.1"/>
<dbReference type="RefSeq" id="NP_035390.1">
    <property type="nucleotide sequence ID" value="NM_011260.2"/>
</dbReference>
<dbReference type="SMR" id="O09049"/>
<dbReference type="FunCoup" id="O09049">
    <property type="interactions" value="51"/>
</dbReference>
<dbReference type="STRING" id="10090.ENSMUSP00000032089"/>
<dbReference type="MEROPS" id="I63.002"/>
<dbReference type="TCDB" id="1.C.111.1.1">
    <property type="family name" value="the regiiiGama (regiiiGama) family"/>
</dbReference>
<dbReference type="jPOST" id="O09049"/>
<dbReference type="PaxDb" id="10090-ENSMUSP00000032089"/>
<dbReference type="PeptideAtlas" id="O09049"/>
<dbReference type="ProteomicsDB" id="255178"/>
<dbReference type="Ensembl" id="ENSMUST00000032089.3">
    <property type="protein sequence ID" value="ENSMUSP00000032089.3"/>
    <property type="gene ID" value="ENSMUSG00000030017.3"/>
</dbReference>
<dbReference type="GeneID" id="19695"/>
<dbReference type="KEGG" id="mmu:19695"/>
<dbReference type="UCSC" id="uc009ckb.1">
    <property type="organism name" value="mouse"/>
</dbReference>
<dbReference type="AGR" id="MGI:109406"/>
<dbReference type="CTD" id="130120"/>
<dbReference type="MGI" id="MGI:109406">
    <property type="gene designation" value="Reg3g"/>
</dbReference>
<dbReference type="VEuPathDB" id="HostDB:ENSMUSG00000030017"/>
<dbReference type="eggNOG" id="KOG4297">
    <property type="taxonomic scope" value="Eukaryota"/>
</dbReference>
<dbReference type="GeneTree" id="ENSGT00940000154447"/>
<dbReference type="HOGENOM" id="CLU_049894_18_0_1"/>
<dbReference type="InParanoid" id="O09049"/>
<dbReference type="OMA" id="WEWSNAD"/>
<dbReference type="OrthoDB" id="418245at2759"/>
<dbReference type="PhylomeDB" id="O09049"/>
<dbReference type="Reactome" id="R-MMU-6803157">
    <property type="pathway name" value="Antimicrobial peptides"/>
</dbReference>
<dbReference type="BioGRID-ORCS" id="19695">
    <property type="hits" value="3 hits in 78 CRISPR screens"/>
</dbReference>
<dbReference type="ChiTaRS" id="Reg3g">
    <property type="organism name" value="mouse"/>
</dbReference>
<dbReference type="PRO" id="PR:O09049"/>
<dbReference type="Proteomes" id="UP000000589">
    <property type="component" value="Chromosome 6"/>
</dbReference>
<dbReference type="RNAct" id="O09049">
    <property type="molecule type" value="protein"/>
</dbReference>
<dbReference type="Bgee" id="ENSMUSG00000030017">
    <property type="expression patterns" value="Expressed in crypt of Lieberkuhn of small intestine and 60 other cell types or tissues"/>
</dbReference>
<dbReference type="ExpressionAtlas" id="O09049">
    <property type="expression patterns" value="baseline and differential"/>
</dbReference>
<dbReference type="GO" id="GO:0062023">
    <property type="term" value="C:collagen-containing extracellular matrix"/>
    <property type="evidence" value="ECO:0007005"/>
    <property type="project" value="BHF-UCL"/>
</dbReference>
<dbReference type="GO" id="GO:0005615">
    <property type="term" value="C:extracellular space"/>
    <property type="evidence" value="ECO:0000314"/>
    <property type="project" value="UniProt"/>
</dbReference>
<dbReference type="GO" id="GO:0030141">
    <property type="term" value="C:secretory granule"/>
    <property type="evidence" value="ECO:0000314"/>
    <property type="project" value="UniProtKB"/>
</dbReference>
<dbReference type="GO" id="GO:0005179">
    <property type="term" value="F:hormone activity"/>
    <property type="evidence" value="ECO:0000314"/>
    <property type="project" value="UniProt"/>
</dbReference>
<dbReference type="GO" id="GO:0046872">
    <property type="term" value="F:metal ion binding"/>
    <property type="evidence" value="ECO:0007669"/>
    <property type="project" value="UniProtKB-KW"/>
</dbReference>
<dbReference type="GO" id="GO:0070492">
    <property type="term" value="F:oligosaccharide binding"/>
    <property type="evidence" value="ECO:0000314"/>
    <property type="project" value="UniProtKB"/>
</dbReference>
<dbReference type="GO" id="GO:0042834">
    <property type="term" value="F:peptidoglycan binding"/>
    <property type="evidence" value="ECO:0000314"/>
    <property type="project" value="UniProtKB"/>
</dbReference>
<dbReference type="GO" id="GO:0006953">
    <property type="term" value="P:acute-phase response"/>
    <property type="evidence" value="ECO:0007669"/>
    <property type="project" value="UniProtKB-KW"/>
</dbReference>
<dbReference type="GO" id="GO:0061844">
    <property type="term" value="P:antimicrobial humoral immune response mediated by antimicrobial peptide"/>
    <property type="evidence" value="ECO:0000314"/>
    <property type="project" value="UniProtKB"/>
</dbReference>
<dbReference type="GO" id="GO:0050829">
    <property type="term" value="P:defense response to Gram-negative bacterium"/>
    <property type="evidence" value="ECO:0000314"/>
    <property type="project" value="UniProtKB"/>
</dbReference>
<dbReference type="GO" id="GO:0050830">
    <property type="term" value="P:defense response to Gram-positive bacterium"/>
    <property type="evidence" value="ECO:0000314"/>
    <property type="project" value="UniProtKB"/>
</dbReference>
<dbReference type="GO" id="GO:0002755">
    <property type="term" value="P:MyD88-dependent toll-like receptor signaling pathway"/>
    <property type="evidence" value="ECO:0000315"/>
    <property type="project" value="UniProtKB"/>
</dbReference>
<dbReference type="GO" id="GO:0050728">
    <property type="term" value="P:negative regulation of inflammatory response"/>
    <property type="evidence" value="ECO:0000314"/>
    <property type="project" value="UniProt"/>
</dbReference>
<dbReference type="GO" id="GO:0106015">
    <property type="term" value="P:negative regulation of inflammatory response to wounding"/>
    <property type="evidence" value="ECO:0000314"/>
    <property type="project" value="UniProt"/>
</dbReference>
<dbReference type="GO" id="GO:0045617">
    <property type="term" value="P:negative regulation of keratinocyte differentiation"/>
    <property type="evidence" value="ECO:0000314"/>
    <property type="project" value="UniProtKB"/>
</dbReference>
<dbReference type="GO" id="GO:2000972">
    <property type="term" value="P:positive regulation of detection of glucose"/>
    <property type="evidence" value="ECO:0000315"/>
    <property type="project" value="UniProt"/>
</dbReference>
<dbReference type="GO" id="GO:0010838">
    <property type="term" value="P:positive regulation of keratinocyte proliferation"/>
    <property type="evidence" value="ECO:0000314"/>
    <property type="project" value="UniProtKB"/>
</dbReference>
<dbReference type="GO" id="GO:0090303">
    <property type="term" value="P:positive regulation of wound healing"/>
    <property type="evidence" value="ECO:0000314"/>
    <property type="project" value="UniProtKB"/>
</dbReference>
<dbReference type="GO" id="GO:0009617">
    <property type="term" value="P:response to bacterium"/>
    <property type="evidence" value="ECO:0000270"/>
    <property type="project" value="MGI"/>
</dbReference>
<dbReference type="GO" id="GO:0032496">
    <property type="term" value="P:response to lipopolysaccharide"/>
    <property type="evidence" value="ECO:0000314"/>
    <property type="project" value="UniProt"/>
</dbReference>
<dbReference type="GO" id="GO:0009609">
    <property type="term" value="P:response to symbiotic bacterium"/>
    <property type="evidence" value="ECO:0000314"/>
    <property type="project" value="UniProt"/>
</dbReference>
<dbReference type="GO" id="GO:0009611">
    <property type="term" value="P:response to wounding"/>
    <property type="evidence" value="ECO:0000314"/>
    <property type="project" value="UniProt"/>
</dbReference>
<dbReference type="CDD" id="cd03594">
    <property type="entry name" value="CLECT_REG-1_like"/>
    <property type="match status" value="1"/>
</dbReference>
<dbReference type="FunFam" id="3.10.100.10:FF:000015">
    <property type="entry name" value="C-type lectin Cal"/>
    <property type="match status" value="1"/>
</dbReference>
<dbReference type="Gene3D" id="3.10.100.10">
    <property type="entry name" value="Mannose-Binding Protein A, subunit A"/>
    <property type="match status" value="1"/>
</dbReference>
<dbReference type="InterPro" id="IPR001304">
    <property type="entry name" value="C-type_lectin-like"/>
</dbReference>
<dbReference type="InterPro" id="IPR016186">
    <property type="entry name" value="C-type_lectin-like/link_sf"/>
</dbReference>
<dbReference type="InterPro" id="IPR050111">
    <property type="entry name" value="C-type_lectin/snaclec_domain"/>
</dbReference>
<dbReference type="InterPro" id="IPR016187">
    <property type="entry name" value="CTDL_fold"/>
</dbReference>
<dbReference type="PANTHER" id="PTHR22803">
    <property type="entry name" value="MANNOSE, PHOSPHOLIPASE, LECTIN RECEPTOR RELATED"/>
    <property type="match status" value="1"/>
</dbReference>
<dbReference type="Pfam" id="PF00059">
    <property type="entry name" value="Lectin_C"/>
    <property type="match status" value="1"/>
</dbReference>
<dbReference type="PRINTS" id="PR01504">
    <property type="entry name" value="PNCREATITSAP"/>
</dbReference>
<dbReference type="SMART" id="SM00034">
    <property type="entry name" value="CLECT"/>
    <property type="match status" value="1"/>
</dbReference>
<dbReference type="SUPFAM" id="SSF56436">
    <property type="entry name" value="C-type lectin-like"/>
    <property type="match status" value="1"/>
</dbReference>
<dbReference type="PROSITE" id="PS50041">
    <property type="entry name" value="C_TYPE_LECTIN_2"/>
    <property type="match status" value="1"/>
</dbReference>
<keyword id="KW-0011">Acute phase</keyword>
<keyword id="KW-0929">Antimicrobial</keyword>
<keyword id="KW-0963">Cytoplasm</keyword>
<keyword id="KW-0903">Direct protein sequencing</keyword>
<keyword id="KW-1015">Disulfide bond</keyword>
<keyword id="KW-0395">Inflammatory response</keyword>
<keyword id="KW-0430">Lectin</keyword>
<keyword id="KW-0479">Metal-binding</keyword>
<keyword id="KW-1185">Reference proteome</keyword>
<keyword id="KW-0964">Secreted</keyword>
<keyword id="KW-0732">Signal</keyword>
<keyword id="KW-0862">Zinc</keyword>
<gene>
    <name evidence="17" type="primary">Reg3g</name>
    <name type="synonym">Pap3</name>
</gene>
<organism>
    <name type="scientific">Mus musculus</name>
    <name type="common">Mouse</name>
    <dbReference type="NCBI Taxonomy" id="10090"/>
    <lineage>
        <taxon>Eukaryota</taxon>
        <taxon>Metazoa</taxon>
        <taxon>Chordata</taxon>
        <taxon>Craniata</taxon>
        <taxon>Vertebrata</taxon>
        <taxon>Euteleostomi</taxon>
        <taxon>Mammalia</taxon>
        <taxon>Eutheria</taxon>
        <taxon>Euarchontoglires</taxon>
        <taxon>Glires</taxon>
        <taxon>Rodentia</taxon>
        <taxon>Myomorpha</taxon>
        <taxon>Muroidea</taxon>
        <taxon>Muridae</taxon>
        <taxon>Murinae</taxon>
        <taxon>Mus</taxon>
        <taxon>Mus</taxon>
    </lineage>
</organism>
<evidence type="ECO:0000250" key="1">
    <source>
        <dbReference type="UniProtKB" id="P42854"/>
    </source>
</evidence>
<evidence type="ECO:0000250" key="2">
    <source>
        <dbReference type="UniProtKB" id="Q06141"/>
    </source>
</evidence>
<evidence type="ECO:0000255" key="3">
    <source>
        <dbReference type="PROSITE-ProRule" id="PRU00040"/>
    </source>
</evidence>
<evidence type="ECO:0000269" key="4">
    <source>
    </source>
</evidence>
<evidence type="ECO:0000269" key="5">
    <source>
    </source>
</evidence>
<evidence type="ECO:0000269" key="6">
    <source>
    </source>
</evidence>
<evidence type="ECO:0000269" key="7">
    <source>
    </source>
</evidence>
<evidence type="ECO:0000269" key="8">
    <source>
    </source>
</evidence>
<evidence type="ECO:0000269" key="9">
    <source>
    </source>
</evidence>
<evidence type="ECO:0000269" key="10">
    <source>
    </source>
</evidence>
<evidence type="ECO:0000269" key="11">
    <source>
    </source>
</evidence>
<evidence type="ECO:0000269" key="12">
    <source>
    </source>
</evidence>
<evidence type="ECO:0000269" key="13">
    <source>
    </source>
</evidence>
<evidence type="ECO:0000269" key="14">
    <source>
    </source>
</evidence>
<evidence type="ECO:0000269" key="15">
    <source>
    </source>
</evidence>
<evidence type="ECO:0000305" key="16"/>
<evidence type="ECO:0000312" key="17">
    <source>
        <dbReference type="MGI" id="MGI:109406"/>
    </source>
</evidence>
<name>REG3G_MOUSE</name>
<proteinExistence type="evidence at protein level"/>
<reference key="1">
    <citation type="journal article" date="1997" name="Gene">
        <title>Structure, chromosomal localization and expression of mouse genes encoding type III Reg, RegIII alpha, RegIII beta, RegIII gamma.</title>
        <authorList>
            <person name="Narushima Y."/>
            <person name="Unno M."/>
            <person name="Nakagawara K."/>
            <person name="Mori M."/>
            <person name="Miyashita H."/>
            <person name="Suzuki Y."/>
            <person name="Noguchi N."/>
            <person name="Takasawa S."/>
            <person name="Kumagai T."/>
            <person name="Yonekura H."/>
            <person name="Okamoto H."/>
        </authorList>
    </citation>
    <scope>NUCLEOTIDE SEQUENCE [GENOMIC DNA / MRNA]</scope>
    <scope>TISSUE SPECIFICITY</scope>
    <source>
        <strain>C57BL/6J</strain>
        <tissue>Liver</tissue>
        <tissue>Pancreas</tissue>
    </source>
</reference>
<reference key="2">
    <citation type="journal article" date="2004" name="Genome Res.">
        <title>The status, quality, and expansion of the NIH full-length cDNA project: the Mammalian Gene Collection (MGC).</title>
        <authorList>
            <consortium name="The MGC Project Team"/>
        </authorList>
    </citation>
    <scope>NUCLEOTIDE SEQUENCE [LARGE SCALE MRNA]</scope>
    <source>
        <tissue>Heart</tissue>
        <tissue>Lung</tissue>
    </source>
</reference>
<reference key="3">
    <citation type="journal article" date="2009" name="J. Biol. Chem.">
        <title>Regulation of C-type lectin antimicrobial activity by a flexible N-terminal prosegment.</title>
        <authorList>
            <person name="Mukherjee S."/>
            <person name="Partch C.L."/>
            <person name="Lehotzky R.E."/>
            <person name="Whitham C.V."/>
            <person name="Chu H."/>
            <person name="Bevins C.L."/>
            <person name="Gardner K.H."/>
            <person name="Hooper L.V."/>
        </authorList>
    </citation>
    <scope>PROTEIN SEQUENCE OF N-TERMINUS</scope>
    <scope>FUNCTION</scope>
    <scope>PROTEOLYTIC PROCESSING</scope>
</reference>
<reference key="4">
    <citation type="journal article" date="2006" name="Protein Expr. Purif.">
        <title>Refolding, purification, and characterization of human and murine RegIII proteins expressed in Escherichia coli.</title>
        <authorList>
            <person name="Cash H.L."/>
            <person name="Whitham C.V."/>
            <person name="Hooper L.V."/>
        </authorList>
    </citation>
    <scope>FUNCTION</scope>
    <scope>TISSUE SPECIFICITY</scope>
</reference>
<reference key="5">
    <citation type="journal article" date="2006" name="Science">
        <title>Symbiotic bacteria direct expression of an intestinal bactericidal lectin.</title>
        <authorList>
            <person name="Cash H.L."/>
            <person name="Whitham C.V."/>
            <person name="Behrendt C.L."/>
            <person name="Hooper L.V."/>
        </authorList>
    </citation>
    <scope>FUNCTION</scope>
    <scope>MANNAN- AND PEPTIDOGLYCAN-BINDING</scope>
    <scope>TISSUE SPECIFICITY</scope>
    <scope>INDUCTION</scope>
    <scope>DEVELOPMENTAL STAGE</scope>
</reference>
<reference key="6">
    <citation type="journal article" date="2007" name="J. Exp. Med.">
        <title>MyD88-mediated signals induce the bactericidal lectin RegIII gamma and protect mice against intestinal Listeria monocytogenes infection.</title>
        <authorList>
            <person name="Brandl K."/>
            <person name="Plitas G."/>
            <person name="Schnabl B."/>
            <person name="DeMatteo R.P."/>
            <person name="Pamer E.G."/>
        </authorList>
    </citation>
    <scope>FUNCTION</scope>
    <scope>INDUCTION</scope>
    <scope>TISSUE SPECIFICITY</scope>
</reference>
<reference key="7">
    <citation type="journal article" date="2010" name="Cell">
        <title>A tissue-specific atlas of mouse protein phosphorylation and expression.</title>
        <authorList>
            <person name="Huttlin E.L."/>
            <person name="Jedrychowski M.P."/>
            <person name="Elias J.E."/>
            <person name="Goswami T."/>
            <person name="Rad R."/>
            <person name="Beausoleil S.A."/>
            <person name="Villen J."/>
            <person name="Haas W."/>
            <person name="Sowa M.E."/>
            <person name="Gygi S.P."/>
        </authorList>
    </citation>
    <scope>IDENTIFICATION BY MASS SPECTROMETRY [LARGE SCALE ANALYSIS]</scope>
    <source>
        <tissue>Kidney</tissue>
        <tissue>Lung</tissue>
        <tissue>Pancreas</tissue>
        <tissue>Testis</tissue>
    </source>
</reference>
<reference key="8">
    <citation type="journal article" date="2011" name="Science">
        <title>The antibacterial lectin RegIIIgamma promotes the spatial segregation of microbiota and host in the intestine.</title>
        <authorList>
            <person name="Vaishnava S."/>
            <person name="Yamamoto M."/>
            <person name="Severson K.M."/>
            <person name="Ruhn K.A."/>
            <person name="Yu X."/>
            <person name="Koren O."/>
            <person name="Ley R."/>
            <person name="Wakeland E.K."/>
            <person name="Hooper L.V."/>
        </authorList>
    </citation>
    <scope>FUNCTION</scope>
    <scope>TISSUE SPECIFICITY</scope>
    <scope>DISRUPTION PHENOTYPE</scope>
</reference>
<reference key="9">
    <citation type="journal article" date="2012" name="Immunity">
        <title>The antimicrobial protein REG3A regulates keratinocyte proliferation and differentiation after skin injury.</title>
        <authorList>
            <person name="Lai Y."/>
            <person name="Li D."/>
            <person name="Li C."/>
            <person name="Muehleisen B."/>
            <person name="Radek K.A."/>
            <person name="Park H.J."/>
            <person name="Jiang Z."/>
            <person name="Li Z."/>
            <person name="Lei H."/>
            <person name="Quan Y."/>
            <person name="Zhang T."/>
            <person name="Wu Y."/>
            <person name="Kotol P."/>
            <person name="Morizane S."/>
            <person name="Hata T.R."/>
            <person name="Iwatsuki K."/>
            <person name="Tang C."/>
            <person name="Gallo R.L."/>
        </authorList>
    </citation>
    <scope>FUNCTION</scope>
    <scope>INDUCTION</scope>
    <scope>TISSUE SPECIFICITY</scope>
</reference>
<reference key="10">
    <citation type="journal article" date="2013" name="J. Exp. Med.">
        <title>Innate Stat3-mediated induction of the antimicrobial protein Reg3gamma is required for host defense against MRSA pneumonia.</title>
        <authorList>
            <person name="Choi S.M."/>
            <person name="McAleer J.P."/>
            <person name="Zheng M."/>
            <person name="Pociask D.A."/>
            <person name="Kaplan M.H."/>
            <person name="Qin S."/>
            <person name="Reinhart T.A."/>
            <person name="Kolls J.K."/>
        </authorList>
    </citation>
    <scope>FUNCTION</scope>
    <scope>INDUCTION</scope>
    <scope>TISSUE SPECIFICITY</scope>
</reference>
<reference key="11">
    <citation type="journal article" date="2016" name="Nat. Commun.">
        <title>Hyperglycaemia inhibits REG3A expression to exacerbate TLR3-mediated skin inflammation in diabetes.</title>
        <authorList>
            <person name="Wu Y."/>
            <person name="Quan Y."/>
            <person name="Liu Y."/>
            <person name="Liu K."/>
            <person name="Li H."/>
            <person name="Jiang Z."/>
            <person name="Zhang T."/>
            <person name="Lei H."/>
            <person name="Radek K.A."/>
            <person name="Li D."/>
            <person name="Wang Z."/>
            <person name="Lu J."/>
            <person name="Wang W."/>
            <person name="Ji S."/>
            <person name="Xia Z."/>
            <person name="Lai Y."/>
        </authorList>
    </citation>
    <scope>FUNCTION</scope>
    <scope>TISSUE SPECIFICITY</scope>
    <scope>INDUCTION BY IL17A AND IL33</scope>
</reference>
<reference key="12">
    <citation type="journal article" date="2017" name="J. Exp. Med.">
        <title>IL-22 induces Reg3gamma and inhibits allergic inflammation in house dust mite-induced asthma models.</title>
        <authorList>
            <person name="Ito T."/>
            <person name="Hirose K."/>
            <person name="Saku A."/>
            <person name="Kono K."/>
            <person name="Takatori H."/>
            <person name="Tamachi T."/>
            <person name="Goto Y."/>
            <person name="Renauld J.C."/>
            <person name="Kiyono H."/>
            <person name="Nakajima H."/>
        </authorList>
    </citation>
    <scope>FUNCTION</scope>
    <scope>INDUCTION BY IL22</scope>
    <scope>TISSUE SPECIFICITY</scope>
    <scope>SUBCELLULAR LOCATION</scope>
</reference>
<reference key="13">
    <citation type="journal article" date="2022" name="Cell Metab.">
        <title>The gut peptide Reg3g links the small intestine microbiome to the regulation of energy balance, glucose levels, and gut function.</title>
        <authorList>
            <person name="Shin J.H."/>
            <person name="Bozadjieva-Kramer N."/>
            <person name="Shao Y."/>
            <person name="Lyons-Abbott S."/>
            <person name="Rupp A.C."/>
            <person name="Sandoval D.A."/>
            <person name="Seeley R.J."/>
        </authorList>
    </citation>
    <scope>FUNCTION</scope>
    <scope>DISRUPTION PHENOTYPE</scope>
    <scope>INDUCTION BY INULIN</scope>
    <scope>SUBCELLULAR LOCATION</scope>
</reference>
<reference key="14">
    <citation type="journal article" date="2022" name="Cell Rep.">
        <title>Nociceptor-derived Reg3gamma prevents endotoxic death by targeting kynurenine pathway in microglia.</title>
        <authorList>
            <person name="Sugisawa E."/>
            <person name="Kondo T."/>
            <person name="Kumagai Y."/>
            <person name="Kato H."/>
            <person name="Takayama Y."/>
            <person name="Isohashi K."/>
            <person name="Shimosegawa E."/>
            <person name="Takemura N."/>
            <person name="Hayashi Y."/>
            <person name="Sasaki T."/>
            <person name="Martino M.M."/>
            <person name="Tominaga M."/>
            <person name="Maruyama K."/>
        </authorList>
    </citation>
    <scope>FUNCTION</scope>
    <scope>DISRUPTION PHENOTYPE</scope>
    <scope>TISSUE SPECIFICITY</scope>
    <scope>INDUCTION BY LPS</scope>
</reference>
<feature type="signal peptide" evidence="7">
    <location>
        <begin position="1"/>
        <end position="26"/>
    </location>
</feature>
<feature type="chain" id="PRO_0000017435" description="Regenerating islet-derived protein 3-gamma 16.5 kDa form">
    <location>
        <begin position="27"/>
        <end position="174"/>
    </location>
</feature>
<feature type="propeptide" id="PRO_0000422753" evidence="7">
    <location>
        <begin position="27"/>
        <end position="37"/>
    </location>
</feature>
<feature type="chain" id="PRO_0000422754" description="Regenerating islet-derived protein 3-gamma 15 kDa form">
    <location>
        <begin position="38"/>
        <end position="174"/>
    </location>
</feature>
<feature type="domain" description="C-type lectin" evidence="3">
    <location>
        <begin position="47"/>
        <end position="171"/>
    </location>
</feature>
<feature type="region of interest" description="Sufficient to activate EXTL3" evidence="2">
    <location>
        <begin position="103"/>
        <end position="118"/>
    </location>
</feature>
<feature type="short sequence motif" description="EPN" evidence="2">
    <location>
        <begin position="114"/>
        <end position="116"/>
    </location>
</feature>
<feature type="binding site" evidence="2">
    <location>
        <position position="107"/>
    </location>
    <ligand>
        <name>Zn(2+)</name>
        <dbReference type="ChEBI" id="CHEBI:29105"/>
    </ligand>
</feature>
<feature type="binding site" evidence="2">
    <location>
        <position position="121"/>
    </location>
    <ligand>
        <name>Zn(2+)</name>
        <dbReference type="ChEBI" id="CHEBI:29105"/>
    </ligand>
</feature>
<feature type="binding site" evidence="2">
    <location>
        <position position="144"/>
    </location>
    <ligand>
        <name>Zn(2+)</name>
        <dbReference type="ChEBI" id="CHEBI:29105"/>
    </ligand>
</feature>
<feature type="disulfide bond" evidence="3">
    <location>
        <begin position="40"/>
        <end position="51"/>
    </location>
</feature>
<feature type="disulfide bond" evidence="3">
    <location>
        <begin position="68"/>
        <end position="170"/>
    </location>
</feature>
<feature type="disulfide bond" evidence="3">
    <location>
        <begin position="145"/>
        <end position="162"/>
    </location>
</feature>
<accession>O09049</accession>